<feature type="chain" id="PRO_0000378919" description="Serine palmitoyltransferase small subunit B">
    <location>
        <begin position="1"/>
        <end position="80"/>
    </location>
</feature>
<feature type="topological domain" description="Cytoplasmic" evidence="3">
    <location>
        <begin position="1"/>
        <end position="11"/>
    </location>
</feature>
<feature type="transmembrane region" description="Helical" evidence="3">
    <location>
        <begin position="12"/>
        <end position="29"/>
    </location>
</feature>
<feature type="topological domain" description="Lumenal" evidence="3">
    <location>
        <begin position="30"/>
        <end position="36"/>
    </location>
</feature>
<feature type="transmembrane region" description="Helical" evidence="3">
    <location>
        <begin position="37"/>
        <end position="57"/>
    </location>
</feature>
<feature type="topological domain" description="Cytoplasmic" evidence="3">
    <location>
        <begin position="58"/>
        <end position="80"/>
    </location>
</feature>
<comment type="function">
    <text evidence="1">Component of the serine palmitoyltransferase multisubunit enzyme (SPT) that catalyzes the initial and rate-limiting step in sphingolipid biosynthesis by condensing L-serine and activated acyl-CoA (most commonly palmitoyl-CoA) to form long-chain bases. The SPT complex is composed of SPTLC1, SPTLC2 or SPTLC3 and SPTSSA or SPTSSB. Within this complex, the heterodimer consisting of SPTLC1 and SPTLC2/SPTLC3 forms the catalytic core. Within the SPT complex, SPTSSB stimulates the catalytic activity and plays a role in substrate specificity. SPT complexes with this subunit showing a preference for longer acyl-CoAs. The SPTLC1-SPTLC2-SPTSSB complex shows a strong preference for C18-CoA substrate, while the SPTLC1-SPTLC3-SPTSSB isozyme displays an ability to use a broader range of acyl-CoAs, without apparent preference.</text>
</comment>
<comment type="pathway">
    <text>Lipid metabolism; sphingolipid metabolism.</text>
</comment>
<comment type="subunit">
    <text evidence="1 2">Component of the serine palmitoyltransferase (SPT) complex, which is composed of SPTLC1, SPTLC2 or SPTLC3 and SPTSSA or SPTSSB. The heterodimer consisting of SPTLC1 and SPTLC2/SPTLC3 forms the catalytic core of the enzyme, while SPTSSA or SPTSSB subunits determine substrate specificity (By similarity). SPT also interacts with ORMDL proteins, especially ORMDL3, which negatively regulate SPT activity in the presence of ceramides (By similarity).</text>
</comment>
<comment type="subcellular location">
    <subcellularLocation>
        <location evidence="4">Endoplasmic reticulum membrane</location>
        <topology evidence="4">Multi-pass membrane protein</topology>
    </subcellularLocation>
</comment>
<comment type="similarity">
    <text evidence="4">Belongs to the SPTSS family. SPTSSB subfamily.</text>
</comment>
<accession>B0S4Q1</accession>
<gene>
    <name type="primary">sptssb</name>
    <name type="synonym">admp</name>
    <name type="synonym">sssptb</name>
</gene>
<proteinExistence type="inferred from homology"/>
<evidence type="ECO:0000250" key="1">
    <source>
        <dbReference type="UniProtKB" id="Q8NFR3"/>
    </source>
</evidence>
<evidence type="ECO:0000250" key="2">
    <source>
        <dbReference type="UniProtKB" id="Q969W0"/>
    </source>
</evidence>
<evidence type="ECO:0000255" key="3"/>
<evidence type="ECO:0000305" key="4"/>
<organism>
    <name type="scientific">Xenopus tropicalis</name>
    <name type="common">Western clawed frog</name>
    <name type="synonym">Silurana tropicalis</name>
    <dbReference type="NCBI Taxonomy" id="8364"/>
    <lineage>
        <taxon>Eukaryota</taxon>
        <taxon>Metazoa</taxon>
        <taxon>Chordata</taxon>
        <taxon>Craniata</taxon>
        <taxon>Vertebrata</taxon>
        <taxon>Euteleostomi</taxon>
        <taxon>Amphibia</taxon>
        <taxon>Batrachia</taxon>
        <taxon>Anura</taxon>
        <taxon>Pipoidea</taxon>
        <taxon>Pipidae</taxon>
        <taxon>Xenopodinae</taxon>
        <taxon>Xenopus</taxon>
        <taxon>Silurana</taxon>
    </lineage>
</organism>
<protein>
    <recommendedName>
        <fullName>Serine palmitoyltransferase small subunit B</fullName>
    </recommendedName>
    <alternativeName>
        <fullName>Protein ADMP</fullName>
    </alternativeName>
    <alternativeName>
        <fullName>Small subunit of serine palmitoyltransferase B</fullName>
        <shortName>ssSPTb</shortName>
    </alternativeName>
</protein>
<reference key="1">
    <citation type="submission" date="2008-02" db="EMBL/GenBank/DDBJ databases">
        <authorList>
            <consortium name="NIH - Xenopus Gene Collection (XGC) project"/>
        </authorList>
    </citation>
    <scope>NUCLEOTIDE SEQUENCE [LARGE SCALE MRNA]</scope>
    <source>
        <tissue>Embryo</tissue>
    </source>
</reference>
<dbReference type="EMBL" id="BC158956">
    <property type="protein sequence ID" value="AAI58957.1"/>
    <property type="molecule type" value="mRNA"/>
</dbReference>
<dbReference type="RefSeq" id="NP_001017215.1">
    <property type="nucleotide sequence ID" value="NM_001017215.2"/>
</dbReference>
<dbReference type="RefSeq" id="XP_017949401.1">
    <property type="nucleotide sequence ID" value="XM_018093912.1"/>
</dbReference>
<dbReference type="SMR" id="B0S4Q1"/>
<dbReference type="FunCoup" id="B0S4Q1">
    <property type="interactions" value="357"/>
</dbReference>
<dbReference type="STRING" id="8364.ENSXETP00000036644"/>
<dbReference type="PaxDb" id="8364-ENSXETP00000019124"/>
<dbReference type="GeneID" id="549969"/>
<dbReference type="KEGG" id="xtr:549969"/>
<dbReference type="AGR" id="Xenbase:XB-GENE-950653"/>
<dbReference type="CTD" id="165679"/>
<dbReference type="Xenbase" id="XB-GENE-950653">
    <property type="gene designation" value="sptssb"/>
</dbReference>
<dbReference type="eggNOG" id="ENOG502S4Q9">
    <property type="taxonomic scope" value="Eukaryota"/>
</dbReference>
<dbReference type="HOGENOM" id="CLU_187811_0_0_1"/>
<dbReference type="InParanoid" id="B0S4Q1"/>
<dbReference type="OMA" id="NFKNMRE"/>
<dbReference type="OrthoDB" id="202672at2759"/>
<dbReference type="PhylomeDB" id="B0S4Q1"/>
<dbReference type="TreeFam" id="TF328418"/>
<dbReference type="Reactome" id="R-XTR-1660661">
    <property type="pathway name" value="Sphingolipid de novo biosynthesis"/>
</dbReference>
<dbReference type="UniPathway" id="UPA00222"/>
<dbReference type="Proteomes" id="UP000008143">
    <property type="component" value="Chromosome 5"/>
</dbReference>
<dbReference type="Bgee" id="ENSXETG00000008728">
    <property type="expression patterns" value="Expressed in egg cell and 10 other cell types or tissues"/>
</dbReference>
<dbReference type="GO" id="GO:0005789">
    <property type="term" value="C:endoplasmic reticulum membrane"/>
    <property type="evidence" value="ECO:0007669"/>
    <property type="project" value="UniProtKB-SubCell"/>
</dbReference>
<dbReference type="GO" id="GO:0017059">
    <property type="term" value="C:serine palmitoyltransferase complex"/>
    <property type="evidence" value="ECO:0000250"/>
    <property type="project" value="UniProtKB"/>
</dbReference>
<dbReference type="GO" id="GO:0046513">
    <property type="term" value="P:ceramide biosynthetic process"/>
    <property type="evidence" value="ECO:0000250"/>
    <property type="project" value="UniProtKB"/>
</dbReference>
<dbReference type="GO" id="GO:0007029">
    <property type="term" value="P:endoplasmic reticulum organization"/>
    <property type="evidence" value="ECO:0000250"/>
    <property type="project" value="UniProtKB"/>
</dbReference>
<dbReference type="GO" id="GO:0030148">
    <property type="term" value="P:sphingolipid biosynthetic process"/>
    <property type="evidence" value="ECO:0000250"/>
    <property type="project" value="UniProtKB"/>
</dbReference>
<dbReference type="InterPro" id="IPR024512">
    <property type="entry name" value="Ser_palmitoyltrfase_ssu-like"/>
</dbReference>
<dbReference type="PANTHER" id="PTHR28612">
    <property type="entry name" value="SERINE PALMITOYLTRANSFERASE SMALL SUBUNIT B"/>
    <property type="match status" value="1"/>
</dbReference>
<dbReference type="PANTHER" id="PTHR28612:SF1">
    <property type="entry name" value="SERINE PALMITOYLTRANSFERASE SMALL SUBUNIT B"/>
    <property type="match status" value="1"/>
</dbReference>
<dbReference type="Pfam" id="PF11779">
    <property type="entry name" value="SPT_ssu-like"/>
    <property type="match status" value="1"/>
</dbReference>
<name>SPTSB_XENTR</name>
<sequence length="80" mass="9372">MDVKHIKDYLSWLYYQYLLITCSYVLEPWEQSIFNTLLLTIIAMVIYSSYIFIPIHVRLAVEFFSGIFGGQHESTVALMS</sequence>
<keyword id="KW-0256">Endoplasmic reticulum</keyword>
<keyword id="KW-0443">Lipid metabolism</keyword>
<keyword id="KW-0472">Membrane</keyword>
<keyword id="KW-1185">Reference proteome</keyword>
<keyword id="KW-0746">Sphingolipid metabolism</keyword>
<keyword id="KW-0812">Transmembrane</keyword>
<keyword id="KW-1133">Transmembrane helix</keyword>